<comment type="function">
    <text evidence="1">Catalyzes the phosphorylation of the 3'-hydroxyl group of dephosphocoenzyme A to form coenzyme A.</text>
</comment>
<comment type="catalytic activity">
    <reaction evidence="1">
        <text>3'-dephospho-CoA + ATP = ADP + CoA + H(+)</text>
        <dbReference type="Rhea" id="RHEA:18245"/>
        <dbReference type="ChEBI" id="CHEBI:15378"/>
        <dbReference type="ChEBI" id="CHEBI:30616"/>
        <dbReference type="ChEBI" id="CHEBI:57287"/>
        <dbReference type="ChEBI" id="CHEBI:57328"/>
        <dbReference type="ChEBI" id="CHEBI:456216"/>
        <dbReference type="EC" id="2.7.1.24"/>
    </reaction>
</comment>
<comment type="pathway">
    <text evidence="1">Cofactor biosynthesis; coenzyme A biosynthesis; CoA from (R)-pantothenate: step 5/5.</text>
</comment>
<comment type="subcellular location">
    <subcellularLocation>
        <location evidence="1">Cytoplasm</location>
    </subcellularLocation>
</comment>
<comment type="similarity">
    <text evidence="1 2">Belongs to the CoaE family.</text>
</comment>
<dbReference type="EC" id="2.7.1.24" evidence="1"/>
<dbReference type="EMBL" id="AE008922">
    <property type="protein sequence ID" value="AAM42373.1"/>
    <property type="molecule type" value="Genomic_DNA"/>
</dbReference>
<dbReference type="EMBL" id="U12432">
    <property type="protein sequence ID" value="AAC43572.1"/>
    <property type="molecule type" value="Genomic_DNA"/>
</dbReference>
<dbReference type="PIR" id="S70811">
    <property type="entry name" value="S70811"/>
</dbReference>
<dbReference type="RefSeq" id="NP_638449.1">
    <property type="nucleotide sequence ID" value="NC_003902.1"/>
</dbReference>
<dbReference type="RefSeq" id="WP_011038217.1">
    <property type="nucleotide sequence ID" value="NC_003902.1"/>
</dbReference>
<dbReference type="SMR" id="Q56764"/>
<dbReference type="STRING" id="190485.XCC3102"/>
<dbReference type="EnsemblBacteria" id="AAM42373">
    <property type="protein sequence ID" value="AAM42373"/>
    <property type="gene ID" value="XCC3102"/>
</dbReference>
<dbReference type="KEGG" id="xcc:XCC3102"/>
<dbReference type="PATRIC" id="fig|190485.4.peg.3314"/>
<dbReference type="eggNOG" id="COG0237">
    <property type="taxonomic scope" value="Bacteria"/>
</dbReference>
<dbReference type="HOGENOM" id="CLU_057180_1_2_6"/>
<dbReference type="OrthoDB" id="9812943at2"/>
<dbReference type="UniPathway" id="UPA00241">
    <property type="reaction ID" value="UER00356"/>
</dbReference>
<dbReference type="Proteomes" id="UP000001010">
    <property type="component" value="Chromosome"/>
</dbReference>
<dbReference type="GO" id="GO:0005737">
    <property type="term" value="C:cytoplasm"/>
    <property type="evidence" value="ECO:0007669"/>
    <property type="project" value="UniProtKB-SubCell"/>
</dbReference>
<dbReference type="GO" id="GO:0005524">
    <property type="term" value="F:ATP binding"/>
    <property type="evidence" value="ECO:0007669"/>
    <property type="project" value="UniProtKB-UniRule"/>
</dbReference>
<dbReference type="GO" id="GO:0004140">
    <property type="term" value="F:dephospho-CoA kinase activity"/>
    <property type="evidence" value="ECO:0000318"/>
    <property type="project" value="GO_Central"/>
</dbReference>
<dbReference type="GO" id="GO:0015937">
    <property type="term" value="P:coenzyme A biosynthetic process"/>
    <property type="evidence" value="ECO:0000318"/>
    <property type="project" value="GO_Central"/>
</dbReference>
<dbReference type="CDD" id="cd02022">
    <property type="entry name" value="DPCK"/>
    <property type="match status" value="1"/>
</dbReference>
<dbReference type="Gene3D" id="3.40.50.300">
    <property type="entry name" value="P-loop containing nucleotide triphosphate hydrolases"/>
    <property type="match status" value="1"/>
</dbReference>
<dbReference type="HAMAP" id="MF_00376">
    <property type="entry name" value="Dephospho_CoA_kinase"/>
    <property type="match status" value="1"/>
</dbReference>
<dbReference type="InterPro" id="IPR001977">
    <property type="entry name" value="Depp_CoAkinase"/>
</dbReference>
<dbReference type="InterPro" id="IPR027417">
    <property type="entry name" value="P-loop_NTPase"/>
</dbReference>
<dbReference type="NCBIfam" id="TIGR00152">
    <property type="entry name" value="dephospho-CoA kinase"/>
    <property type="match status" value="1"/>
</dbReference>
<dbReference type="PANTHER" id="PTHR10695:SF46">
    <property type="entry name" value="BIFUNCTIONAL COENZYME A SYNTHASE-RELATED"/>
    <property type="match status" value="1"/>
</dbReference>
<dbReference type="PANTHER" id="PTHR10695">
    <property type="entry name" value="DEPHOSPHO-COA KINASE-RELATED"/>
    <property type="match status" value="1"/>
</dbReference>
<dbReference type="Pfam" id="PF01121">
    <property type="entry name" value="CoaE"/>
    <property type="match status" value="1"/>
</dbReference>
<dbReference type="SUPFAM" id="SSF52540">
    <property type="entry name" value="P-loop containing nucleoside triphosphate hydrolases"/>
    <property type="match status" value="1"/>
</dbReference>
<dbReference type="PROSITE" id="PS51219">
    <property type="entry name" value="DPCK"/>
    <property type="match status" value="1"/>
</dbReference>
<sequence length="207" mass="22098">MSNFIVGLTGGIASGKSALAAEFEKLGVPVVDADVVARQVVAPGLILDAITNRFGQGILLPDGTLDRQALRKIVFADPTERRALEAITHPAIRTELQRAAKAANHPYAIVAIPLLAEAGARATYPWLDRILVVDVPVALQHARLMQRDGSTSALAGQMIAAQASRAQRLAIADDVVSNEGNTDQLAQQAQRLDATYRAALQTHRIEN</sequence>
<reference key="1">
    <citation type="journal article" date="2002" name="Nature">
        <title>Comparison of the genomes of two Xanthomonas pathogens with differing host specificities.</title>
        <authorList>
            <person name="da Silva A.C.R."/>
            <person name="Ferro J.A."/>
            <person name="Reinach F.C."/>
            <person name="Farah C.S."/>
            <person name="Furlan L.R."/>
            <person name="Quaggio R.B."/>
            <person name="Monteiro-Vitorello C.B."/>
            <person name="Van Sluys M.A."/>
            <person name="Almeida N.F. Jr."/>
            <person name="Alves L.M.C."/>
            <person name="do Amaral A.M."/>
            <person name="Bertolini M.C."/>
            <person name="Camargo L.E.A."/>
            <person name="Camarotte G."/>
            <person name="Cannavan F."/>
            <person name="Cardozo J."/>
            <person name="Chambergo F."/>
            <person name="Ciapina L.P."/>
            <person name="Cicarelli R.M.B."/>
            <person name="Coutinho L.L."/>
            <person name="Cursino-Santos J.R."/>
            <person name="El-Dorry H."/>
            <person name="Faria J.B."/>
            <person name="Ferreira A.J.S."/>
            <person name="Ferreira R.C.C."/>
            <person name="Ferro M.I.T."/>
            <person name="Formighieri E.F."/>
            <person name="Franco M.C."/>
            <person name="Greggio C.C."/>
            <person name="Gruber A."/>
            <person name="Katsuyama A.M."/>
            <person name="Kishi L.T."/>
            <person name="Leite R.P."/>
            <person name="Lemos E.G.M."/>
            <person name="Lemos M.V.F."/>
            <person name="Locali E.C."/>
            <person name="Machado M.A."/>
            <person name="Madeira A.M.B.N."/>
            <person name="Martinez-Rossi N.M."/>
            <person name="Martins E.C."/>
            <person name="Meidanis J."/>
            <person name="Menck C.F.M."/>
            <person name="Miyaki C.Y."/>
            <person name="Moon D.H."/>
            <person name="Moreira L.M."/>
            <person name="Novo M.T.M."/>
            <person name="Okura V.K."/>
            <person name="Oliveira M.C."/>
            <person name="Oliveira V.R."/>
            <person name="Pereira H.A."/>
            <person name="Rossi A."/>
            <person name="Sena J.A.D."/>
            <person name="Silva C."/>
            <person name="de Souza R.F."/>
            <person name="Spinola L.A.F."/>
            <person name="Takita M.A."/>
            <person name="Tamura R.E."/>
            <person name="Teixeira E.C."/>
            <person name="Tezza R.I.D."/>
            <person name="Trindade dos Santos M."/>
            <person name="Truffi D."/>
            <person name="Tsai S.M."/>
            <person name="White F.F."/>
            <person name="Setubal J.C."/>
            <person name="Kitajima J.P."/>
        </authorList>
    </citation>
    <scope>NUCLEOTIDE SEQUENCE [LARGE SCALE GENOMIC DNA]</scope>
    <source>
        <strain>ATCC 33913 / DSM 3586 / NCPPB 528 / LMG 568 / P 25</strain>
    </source>
</reference>
<reference key="2">
    <citation type="journal article" date="1995" name="Mol. Microbiol.">
        <title>The type IV pre-pilin leader peptidase of Xanthomonas campestris pv. campestris is functional without conserved cysteine residues.</title>
        <authorList>
            <person name="Hu N.-T.T."/>
            <person name="Lee P.F."/>
            <person name="Chen C."/>
        </authorList>
    </citation>
    <scope>NUCLEOTIDE SEQUENCE [GENOMIC DNA] OF 1-134</scope>
    <source>
        <strain>Xc1701</strain>
    </source>
</reference>
<accession>Q56764</accession>
<evidence type="ECO:0000255" key="1">
    <source>
        <dbReference type="HAMAP-Rule" id="MF_00376"/>
    </source>
</evidence>
<evidence type="ECO:0000305" key="2"/>
<protein>
    <recommendedName>
        <fullName evidence="1">Dephospho-CoA kinase</fullName>
        <ecNumber evidence="1">2.7.1.24</ecNumber>
    </recommendedName>
    <alternativeName>
        <fullName evidence="1">Dephosphocoenzyme A kinase</fullName>
    </alternativeName>
</protein>
<organism>
    <name type="scientific">Xanthomonas campestris pv. campestris (strain ATCC 33913 / DSM 3586 / NCPPB 528 / LMG 568 / P 25)</name>
    <dbReference type="NCBI Taxonomy" id="190485"/>
    <lineage>
        <taxon>Bacteria</taxon>
        <taxon>Pseudomonadati</taxon>
        <taxon>Pseudomonadota</taxon>
        <taxon>Gammaproteobacteria</taxon>
        <taxon>Lysobacterales</taxon>
        <taxon>Lysobacteraceae</taxon>
        <taxon>Xanthomonas</taxon>
    </lineage>
</organism>
<proteinExistence type="inferred from homology"/>
<gene>
    <name evidence="1" type="primary">coaE</name>
    <name type="ordered locus">XCC3102</name>
</gene>
<name>COAE_XANCP</name>
<feature type="chain" id="PRO_0000173035" description="Dephospho-CoA kinase">
    <location>
        <begin position="1"/>
        <end position="207"/>
    </location>
</feature>
<feature type="domain" description="DPCK" evidence="1">
    <location>
        <begin position="5"/>
        <end position="207"/>
    </location>
</feature>
<feature type="binding site" evidence="1">
    <location>
        <begin position="13"/>
        <end position="18"/>
    </location>
    <ligand>
        <name>ATP</name>
        <dbReference type="ChEBI" id="CHEBI:30616"/>
    </ligand>
</feature>
<keyword id="KW-0067">ATP-binding</keyword>
<keyword id="KW-0173">Coenzyme A biosynthesis</keyword>
<keyword id="KW-0963">Cytoplasm</keyword>
<keyword id="KW-0418">Kinase</keyword>
<keyword id="KW-0547">Nucleotide-binding</keyword>
<keyword id="KW-1185">Reference proteome</keyword>
<keyword id="KW-0808">Transferase</keyword>